<accession>P0A310</accession>
<accession>P35619</accession>
<accession>P80097</accession>
<protein>
    <recommendedName>
        <fullName>Bacteriocin sakacin-A</fullName>
    </recommendedName>
</protein>
<gene>
    <name type="primary">sapA</name>
    <name type="synonym">sakA</name>
</gene>
<keyword id="KW-0002">3D-structure</keyword>
<keyword id="KW-0044">Antibiotic</keyword>
<keyword id="KW-0929">Antimicrobial</keyword>
<keyword id="KW-0078">Bacteriocin</keyword>
<keyword id="KW-0903">Direct protein sequencing</keyword>
<keyword id="KW-1015">Disulfide bond</keyword>
<keyword id="KW-0964">Secreted</keyword>
<reference key="1">
    <citation type="journal article" date="1992" name="J. Gen. Microbiol.">
        <title>Purification and amino acid sequence of sakacin A, a bacteriocin from Lactobacillus sake Lb706.</title>
        <authorList>
            <person name="Holck A.L."/>
            <person name="Axelsson L."/>
            <person name="Birkeland S.-E."/>
            <person name="Aukrust T."/>
            <person name="Blom H."/>
        </authorList>
    </citation>
    <scope>NUCLEOTIDE SEQUENCE [GENOMIC DNA]</scope>
    <scope>PROTEIN SEQUENCE</scope>
    <source>
        <strain>Lb706</strain>
    </source>
</reference>
<reference key="2">
    <citation type="journal article" date="1995" name="J. Bacteriol.">
        <title>The genes involved in production of and immunity to sakacin A, a bacteriocin from Lactobacillus sake Lb706.</title>
        <authorList>
            <person name="Axelsson L."/>
            <person name="Holck A."/>
        </authorList>
    </citation>
    <scope>NUCLEOTIDE SEQUENCE [GENOMIC DNA]</scope>
    <source>
        <strain>Lb706</strain>
    </source>
</reference>
<evidence type="ECO:0000250" key="1"/>
<evidence type="ECO:0000305" key="2"/>
<evidence type="ECO:0007829" key="3">
    <source>
        <dbReference type="PDB" id="7XNO"/>
    </source>
</evidence>
<organism>
    <name type="scientific">Latilactobacillus sakei</name>
    <name type="common">Lactobacillus sakei</name>
    <dbReference type="NCBI Taxonomy" id="1599"/>
    <lineage>
        <taxon>Bacteria</taxon>
        <taxon>Bacillati</taxon>
        <taxon>Bacillota</taxon>
        <taxon>Bacilli</taxon>
        <taxon>Lactobacillales</taxon>
        <taxon>Lactobacillaceae</taxon>
        <taxon>Latilactobacillus</taxon>
    </lineage>
</organism>
<name>SAKA_LATSK</name>
<sequence length="59" mass="6257">MNNVKELSMTELQTITGGARSYGNGVYCNNKKCWVNRGEATQSIIGGMISGWASGLAGM</sequence>
<proteinExistence type="evidence at protein level"/>
<feature type="propeptide" id="PRO_0000002749">
    <location>
        <begin position="1"/>
        <end position="18"/>
    </location>
</feature>
<feature type="chain" id="PRO_0000002750" description="Bacteriocin sakacin-A">
    <location>
        <begin position="19"/>
        <end position="59"/>
    </location>
</feature>
<feature type="disulfide bond" evidence="1">
    <location>
        <begin position="28"/>
        <end position="33"/>
    </location>
</feature>
<feature type="strand" evidence="3">
    <location>
        <begin position="26"/>
        <end position="28"/>
    </location>
</feature>
<feature type="strand" evidence="3">
    <location>
        <begin position="33"/>
        <end position="35"/>
    </location>
</feature>
<feature type="helix" evidence="3">
    <location>
        <begin position="37"/>
        <end position="57"/>
    </location>
</feature>
<dbReference type="EMBL" id="Z14233">
    <property type="protein sequence ID" value="CAA78600.1"/>
    <property type="molecule type" value="Genomic_DNA"/>
</dbReference>
<dbReference type="EMBL" id="Z46867">
    <property type="protein sequence ID" value="CAA86942.1"/>
    <property type="molecule type" value="Genomic_DNA"/>
</dbReference>
<dbReference type="PIR" id="C56273">
    <property type="entry name" value="C56273"/>
</dbReference>
<dbReference type="RefSeq" id="WP_032488606.1">
    <property type="nucleotide sequence ID" value="NZ_MKGH01000063.1"/>
</dbReference>
<dbReference type="PDB" id="7XNO">
    <property type="method" value="EM"/>
    <property type="resolution" value="2.54 A"/>
    <property type="chains" value="A/C/G=19-59"/>
</dbReference>
<dbReference type="PDBsum" id="7XNO"/>
<dbReference type="EMDB" id="EMD-33321"/>
<dbReference type="SMR" id="P0A310"/>
<dbReference type="TCDB" id="1.C.24.1.8">
    <property type="family name" value="the pediocin (pediocin) family"/>
</dbReference>
<dbReference type="GO" id="GO:0005576">
    <property type="term" value="C:extracellular region"/>
    <property type="evidence" value="ECO:0007669"/>
    <property type="project" value="UniProtKB-SubCell"/>
</dbReference>
<dbReference type="GO" id="GO:0042742">
    <property type="term" value="P:defense response to bacterium"/>
    <property type="evidence" value="ECO:0007669"/>
    <property type="project" value="UniProtKB-KW"/>
</dbReference>
<dbReference type="GO" id="GO:0031640">
    <property type="term" value="P:killing of cells of another organism"/>
    <property type="evidence" value="ECO:0007669"/>
    <property type="project" value="UniProtKB-KW"/>
</dbReference>
<dbReference type="FunFam" id="1.20.5.130:FF:000001">
    <property type="entry name" value="Bacteriocin hiracin-JM79"/>
    <property type="match status" value="1"/>
</dbReference>
<dbReference type="Gene3D" id="1.20.5.130">
    <property type="match status" value="1"/>
</dbReference>
<dbReference type="InterPro" id="IPR002633">
    <property type="entry name" value="Bacteriocin_IIa"/>
</dbReference>
<dbReference type="InterPro" id="IPR023384">
    <property type="entry name" value="Bacteriocin_IIa_CS"/>
</dbReference>
<dbReference type="InterPro" id="IPR023388">
    <property type="entry name" value="Bacteriocin_IIa_dom_sf"/>
</dbReference>
<dbReference type="InterPro" id="IPR010133">
    <property type="entry name" value="Bacteriocin_signal_seq"/>
</dbReference>
<dbReference type="NCBIfam" id="TIGR01847">
    <property type="entry name" value="bacteriocin_sig"/>
    <property type="match status" value="1"/>
</dbReference>
<dbReference type="Pfam" id="PF01721">
    <property type="entry name" value="Bacteriocin_II"/>
    <property type="match status" value="1"/>
</dbReference>
<dbReference type="PROSITE" id="PS60030">
    <property type="entry name" value="BACTERIOCIN_IIA"/>
    <property type="match status" value="1"/>
</dbReference>
<comment type="function">
    <text>Bactericidal activity; inhibits closely related Lactobacilli, Listeria monocytogenes and ivanovvi, Enterococcus faecalis, Carnobacterium sp and Brocothrix thermosphacta.</text>
</comment>
<comment type="subcellular location">
    <subcellularLocation>
        <location>Secreted</location>
    </subcellularLocation>
</comment>
<comment type="similarity">
    <text evidence="2">Belongs to the bacteriocin class IIA/YGNGV family.</text>
</comment>